<comment type="function">
    <text evidence="1">Involved in the biosynthesis of ADP-glucose, a building block required for the elongation reactions to produce glycogen. Catalyzes the reaction between ATP and alpha-D-glucose 1-phosphate (G1P) to produce pyrophosphate and ADP-Glc.</text>
</comment>
<comment type="catalytic activity">
    <reaction evidence="1">
        <text>alpha-D-glucose 1-phosphate + ATP + H(+) = ADP-alpha-D-glucose + diphosphate</text>
        <dbReference type="Rhea" id="RHEA:12120"/>
        <dbReference type="ChEBI" id="CHEBI:15378"/>
        <dbReference type="ChEBI" id="CHEBI:30616"/>
        <dbReference type="ChEBI" id="CHEBI:33019"/>
        <dbReference type="ChEBI" id="CHEBI:57498"/>
        <dbReference type="ChEBI" id="CHEBI:58601"/>
        <dbReference type="EC" id="2.7.7.27"/>
    </reaction>
</comment>
<comment type="pathway">
    <text evidence="1">Glycan biosynthesis; glycogen biosynthesis.</text>
</comment>
<comment type="subunit">
    <text evidence="1">Homotetramer.</text>
</comment>
<comment type="similarity">
    <text evidence="1">Belongs to the bacterial/plant glucose-1-phosphate adenylyltransferase family.</text>
</comment>
<name>GLGC_RIPO1</name>
<feature type="chain" id="PRO_1000130473" description="Glucose-1-phosphate adenylyltransferase">
    <location>
        <begin position="1"/>
        <end position="429"/>
    </location>
</feature>
<feature type="binding site" evidence="1">
    <location>
        <position position="162"/>
    </location>
    <ligand>
        <name>alpha-D-glucose 1-phosphate</name>
        <dbReference type="ChEBI" id="CHEBI:58601"/>
    </ligand>
</feature>
<feature type="binding site" evidence="1">
    <location>
        <begin position="177"/>
        <end position="178"/>
    </location>
    <ligand>
        <name>alpha-D-glucose 1-phosphate</name>
        <dbReference type="ChEBI" id="CHEBI:58601"/>
    </ligand>
</feature>
<feature type="binding site" evidence="1">
    <location>
        <position position="209"/>
    </location>
    <ligand>
        <name>alpha-D-glucose 1-phosphate</name>
        <dbReference type="ChEBI" id="CHEBI:58601"/>
    </ligand>
</feature>
<reference key="1">
    <citation type="journal article" date="2011" name="MBio">
        <title>Novel metabolic attributes of the genus Cyanothece, comprising a group of unicellular nitrogen-fixing Cyanobacteria.</title>
        <authorList>
            <person name="Bandyopadhyay A."/>
            <person name="Elvitigala T."/>
            <person name="Welsh E."/>
            <person name="Stockel J."/>
            <person name="Liberton M."/>
            <person name="Min H."/>
            <person name="Sherman L.A."/>
            <person name="Pakrasi H.B."/>
        </authorList>
    </citation>
    <scope>NUCLEOTIDE SEQUENCE [LARGE SCALE GENOMIC DNA]</scope>
    <source>
        <strain>PCC 8801 / RF-1</strain>
    </source>
</reference>
<organism>
    <name type="scientific">Rippkaea orientalis (strain PCC 8801 / RF-1)</name>
    <name type="common">Cyanothece sp. (strain PCC 8801)</name>
    <dbReference type="NCBI Taxonomy" id="41431"/>
    <lineage>
        <taxon>Bacteria</taxon>
        <taxon>Bacillati</taxon>
        <taxon>Cyanobacteriota</taxon>
        <taxon>Cyanophyceae</taxon>
        <taxon>Oscillatoriophycideae</taxon>
        <taxon>Chroococcales</taxon>
        <taxon>Aphanothecaceae</taxon>
        <taxon>Rippkaea</taxon>
        <taxon>Rippkaea orientalis</taxon>
    </lineage>
</organism>
<dbReference type="EC" id="2.7.7.27" evidence="1"/>
<dbReference type="EMBL" id="CP001287">
    <property type="protein sequence ID" value="ACK68000.1"/>
    <property type="molecule type" value="Genomic_DNA"/>
</dbReference>
<dbReference type="RefSeq" id="WP_012597253.1">
    <property type="nucleotide sequence ID" value="NC_011726.1"/>
</dbReference>
<dbReference type="SMR" id="B7K5U7"/>
<dbReference type="STRING" id="41431.PCC8801_4064"/>
<dbReference type="KEGG" id="cyp:PCC8801_4064"/>
<dbReference type="eggNOG" id="COG0448">
    <property type="taxonomic scope" value="Bacteria"/>
</dbReference>
<dbReference type="HOGENOM" id="CLU_029499_14_4_3"/>
<dbReference type="OrthoDB" id="9801810at2"/>
<dbReference type="UniPathway" id="UPA00164"/>
<dbReference type="Proteomes" id="UP000008204">
    <property type="component" value="Chromosome"/>
</dbReference>
<dbReference type="GO" id="GO:0031470">
    <property type="term" value="C:carboxysome"/>
    <property type="evidence" value="ECO:0007669"/>
    <property type="project" value="UniProtKB-ARBA"/>
</dbReference>
<dbReference type="GO" id="GO:0005524">
    <property type="term" value="F:ATP binding"/>
    <property type="evidence" value="ECO:0007669"/>
    <property type="project" value="UniProtKB-KW"/>
</dbReference>
<dbReference type="GO" id="GO:0008878">
    <property type="term" value="F:glucose-1-phosphate adenylyltransferase activity"/>
    <property type="evidence" value="ECO:0007669"/>
    <property type="project" value="UniProtKB-UniRule"/>
</dbReference>
<dbReference type="GO" id="GO:0043886">
    <property type="term" value="F:structural constituent of carboxysome shell"/>
    <property type="evidence" value="ECO:0007669"/>
    <property type="project" value="UniProtKB-ARBA"/>
</dbReference>
<dbReference type="GO" id="GO:0005978">
    <property type="term" value="P:glycogen biosynthetic process"/>
    <property type="evidence" value="ECO:0007669"/>
    <property type="project" value="UniProtKB-UniRule"/>
</dbReference>
<dbReference type="CDD" id="cd02508">
    <property type="entry name" value="ADP_Glucose_PP"/>
    <property type="match status" value="1"/>
</dbReference>
<dbReference type="CDD" id="cd04651">
    <property type="entry name" value="LbH_G1P_AT_C"/>
    <property type="match status" value="1"/>
</dbReference>
<dbReference type="Gene3D" id="2.160.10.10">
    <property type="entry name" value="Hexapeptide repeat proteins"/>
    <property type="match status" value="1"/>
</dbReference>
<dbReference type="Gene3D" id="3.90.550.10">
    <property type="entry name" value="Spore Coat Polysaccharide Biosynthesis Protein SpsA, Chain A"/>
    <property type="match status" value="1"/>
</dbReference>
<dbReference type="HAMAP" id="MF_00624">
    <property type="entry name" value="GlgC"/>
    <property type="match status" value="1"/>
</dbReference>
<dbReference type="InterPro" id="IPR011831">
    <property type="entry name" value="ADP-Glc_PPase"/>
</dbReference>
<dbReference type="InterPro" id="IPR005836">
    <property type="entry name" value="ADP_Glu_pyroP_CS"/>
</dbReference>
<dbReference type="InterPro" id="IPR023049">
    <property type="entry name" value="GlgC_bac"/>
</dbReference>
<dbReference type="InterPro" id="IPR005835">
    <property type="entry name" value="NTP_transferase_dom"/>
</dbReference>
<dbReference type="InterPro" id="IPR029044">
    <property type="entry name" value="Nucleotide-diphossugar_trans"/>
</dbReference>
<dbReference type="InterPro" id="IPR011004">
    <property type="entry name" value="Trimer_LpxA-like_sf"/>
</dbReference>
<dbReference type="NCBIfam" id="TIGR02091">
    <property type="entry name" value="glgC"/>
    <property type="match status" value="1"/>
</dbReference>
<dbReference type="NCBIfam" id="NF002772">
    <property type="entry name" value="PRK02862.1"/>
    <property type="match status" value="1"/>
</dbReference>
<dbReference type="PANTHER" id="PTHR43523:SF12">
    <property type="entry name" value="GLUCOSE-1-PHOSPHATE ADENYLYLTRANSFERASE LARGE SUBUNIT 1, CHLOROPLASTIC-RELATED"/>
    <property type="match status" value="1"/>
</dbReference>
<dbReference type="PANTHER" id="PTHR43523">
    <property type="entry name" value="GLUCOSE-1-PHOSPHATE ADENYLYLTRANSFERASE-RELATED"/>
    <property type="match status" value="1"/>
</dbReference>
<dbReference type="Pfam" id="PF25247">
    <property type="entry name" value="LbH_GLGC"/>
    <property type="match status" value="1"/>
</dbReference>
<dbReference type="Pfam" id="PF00483">
    <property type="entry name" value="NTP_transferase"/>
    <property type="match status" value="1"/>
</dbReference>
<dbReference type="SUPFAM" id="SSF53448">
    <property type="entry name" value="Nucleotide-diphospho-sugar transferases"/>
    <property type="match status" value="1"/>
</dbReference>
<dbReference type="SUPFAM" id="SSF51161">
    <property type="entry name" value="Trimeric LpxA-like enzymes"/>
    <property type="match status" value="1"/>
</dbReference>
<dbReference type="PROSITE" id="PS00808">
    <property type="entry name" value="ADP_GLC_PYROPHOSPH_1"/>
    <property type="match status" value="1"/>
</dbReference>
<dbReference type="PROSITE" id="PS00809">
    <property type="entry name" value="ADP_GLC_PYROPHOSPH_2"/>
    <property type="match status" value="1"/>
</dbReference>
<dbReference type="PROSITE" id="PS00810">
    <property type="entry name" value="ADP_GLC_PYROPHOSPH_3"/>
    <property type="match status" value="1"/>
</dbReference>
<accession>B7K5U7</accession>
<sequence>MKKVLAIILGGGAGTRLYPLTKLRAKPAVPLAGKYRLIDIPLSNCINSEILKIYVLTQFNSASLNRHLTRTYNFTGFSDGFVEVLAAQQTAENPKWFQGTADAVRQYLWAFQEWDIDEYLILSGDHLYRMDYRDFIQRHRETGADITLSVVPIDEERASSFGLMKIDDHGRVVDFSEKPKGDELKQMQVDTTVLGLTPEQAKESPYIASMGIYVFKKEVLAQLLEENPDQTDFGKEIIPFSAKDYNLQAYLFKGYWEDIGTIKAFYEANLALNRQPSPRFSFYNEEYPIYTRSRYLPPTKALNCTITESMVSEGCILKDCRIHNSILGIRTRIEANCTIEDTMLMGADYYESPSLRESKAQEGKIPMGIGEGSTIRRAIVDKNARIGRNVTIVNKENIDESNQEESGFYIRNGIVVILKNATIADGTVI</sequence>
<proteinExistence type="inferred from homology"/>
<protein>
    <recommendedName>
        <fullName evidence="1">Glucose-1-phosphate adenylyltransferase</fullName>
        <ecNumber evidence="1">2.7.7.27</ecNumber>
    </recommendedName>
    <alternativeName>
        <fullName evidence="1">ADP-glucose pyrophosphorylase</fullName>
        <shortName evidence="1">ADPGlc PPase</shortName>
    </alternativeName>
    <alternativeName>
        <fullName evidence="1">ADP-glucose synthase</fullName>
    </alternativeName>
</protein>
<keyword id="KW-0067">ATP-binding</keyword>
<keyword id="KW-0119">Carbohydrate metabolism</keyword>
<keyword id="KW-0320">Glycogen biosynthesis</keyword>
<keyword id="KW-0321">Glycogen metabolism</keyword>
<keyword id="KW-0547">Nucleotide-binding</keyword>
<keyword id="KW-0548">Nucleotidyltransferase</keyword>
<keyword id="KW-1185">Reference proteome</keyword>
<keyword id="KW-0808">Transferase</keyword>
<evidence type="ECO:0000255" key="1">
    <source>
        <dbReference type="HAMAP-Rule" id="MF_00624"/>
    </source>
</evidence>
<gene>
    <name evidence="1" type="primary">glgC</name>
    <name type="ordered locus">PCC8801_4064</name>
</gene>